<organism>
    <name type="scientific">Yersinia pestis bv. Antiqua (strain Nepal516)</name>
    <dbReference type="NCBI Taxonomy" id="377628"/>
    <lineage>
        <taxon>Bacteria</taxon>
        <taxon>Pseudomonadati</taxon>
        <taxon>Pseudomonadota</taxon>
        <taxon>Gammaproteobacteria</taxon>
        <taxon>Enterobacterales</taxon>
        <taxon>Yersiniaceae</taxon>
        <taxon>Yersinia</taxon>
    </lineage>
</organism>
<sequence length="290" mass="33775">MRAPLLLESRDYLLSEQMPVAVTNRYPQETFVEHTHQFCEIVIVWRGNGLHVLNDHPYRITCGDVFYIQAADHHSYESVHDLVLDNIIYCPERLHLNAQWHKLLPPLGPEQNQGYWRLTTQGMAQARPIIQQLAQESRKTDSWSIQLTEVLLLQLAIVLKRHRYRAEQAHLLPDGEQLDLIMSALQQSLGAYFDMADFCHKNQLVERSLKQLFRQQTGMSISHYLRQIRLCHAKCLLRGSEHRISDIAARCGFEDSNYFSAVFTREAGMTPRDYRQRFIRSPVLPAKNEP</sequence>
<keyword id="KW-0010">Activator</keyword>
<keyword id="KW-0963">Cytoplasm</keyword>
<keyword id="KW-0238">DNA-binding</keyword>
<keyword id="KW-0677">Repeat</keyword>
<keyword id="KW-0684">Rhamnose metabolism</keyword>
<keyword id="KW-0804">Transcription</keyword>
<keyword id="KW-0805">Transcription regulation</keyword>
<reference key="1">
    <citation type="journal article" date="2006" name="J. Bacteriol.">
        <title>Complete genome sequence of Yersinia pestis strains Antiqua and Nepal516: evidence of gene reduction in an emerging pathogen.</title>
        <authorList>
            <person name="Chain P.S.G."/>
            <person name="Hu P."/>
            <person name="Malfatti S.A."/>
            <person name="Radnedge L."/>
            <person name="Larimer F."/>
            <person name="Vergez L.M."/>
            <person name="Worsham P."/>
            <person name="Chu M.C."/>
            <person name="Andersen G.L."/>
        </authorList>
    </citation>
    <scope>NUCLEOTIDE SEQUENCE [LARGE SCALE GENOMIC DNA]</scope>
    <source>
        <strain>Nepal516</strain>
    </source>
</reference>
<reference key="2">
    <citation type="submission" date="2009-04" db="EMBL/GenBank/DDBJ databases">
        <title>Yersinia pestis Nepal516A whole genome shotgun sequencing project.</title>
        <authorList>
            <person name="Plunkett G. III"/>
            <person name="Anderson B.D."/>
            <person name="Baumler D.J."/>
            <person name="Burland V."/>
            <person name="Cabot E.L."/>
            <person name="Glasner J.D."/>
            <person name="Mau B."/>
            <person name="Neeno-Eckwall E."/>
            <person name="Perna N.T."/>
            <person name="Munk A.C."/>
            <person name="Tapia R."/>
            <person name="Green L.D."/>
            <person name="Rogers Y.C."/>
            <person name="Detter J.C."/>
            <person name="Bruce D.C."/>
            <person name="Brettin T.S."/>
        </authorList>
    </citation>
    <scope>NUCLEOTIDE SEQUENCE [LARGE SCALE GENOMIC DNA]</scope>
    <source>
        <strain>Nepal516</strain>
    </source>
</reference>
<gene>
    <name evidence="1" type="primary">rhaR</name>
    <name type="ordered locus">YPN_3337</name>
    <name type="ORF">YP516_3793</name>
</gene>
<protein>
    <recommendedName>
        <fullName evidence="1">HTH-type transcriptional activator RhaR</fullName>
    </recommendedName>
    <alternativeName>
        <fullName evidence="1">L-rhamnose operon transcriptional activator RhaR</fullName>
    </alternativeName>
</protein>
<proteinExistence type="inferred from homology"/>
<name>RHAR_YERPN</name>
<dbReference type="EMBL" id="CP000305">
    <property type="protein sequence ID" value="ABG19664.1"/>
    <property type="molecule type" value="Genomic_DNA"/>
</dbReference>
<dbReference type="EMBL" id="ACNQ01000017">
    <property type="protein sequence ID" value="EEO75854.1"/>
    <property type="molecule type" value="Genomic_DNA"/>
</dbReference>
<dbReference type="RefSeq" id="WP_002209110.1">
    <property type="nucleotide sequence ID" value="NZ_ACNQ01000017.1"/>
</dbReference>
<dbReference type="SMR" id="Q1CEB6"/>
<dbReference type="GeneID" id="57974272"/>
<dbReference type="KEGG" id="ypn:YPN_3337"/>
<dbReference type="HOGENOM" id="CLU_000445_88_5_6"/>
<dbReference type="Proteomes" id="UP000008936">
    <property type="component" value="Chromosome"/>
</dbReference>
<dbReference type="GO" id="GO:0005737">
    <property type="term" value="C:cytoplasm"/>
    <property type="evidence" value="ECO:0007669"/>
    <property type="project" value="UniProtKB-SubCell"/>
</dbReference>
<dbReference type="GO" id="GO:0003700">
    <property type="term" value="F:DNA-binding transcription factor activity"/>
    <property type="evidence" value="ECO:0007669"/>
    <property type="project" value="UniProtKB-UniRule"/>
</dbReference>
<dbReference type="GO" id="GO:0043565">
    <property type="term" value="F:sequence-specific DNA binding"/>
    <property type="evidence" value="ECO:0007669"/>
    <property type="project" value="InterPro"/>
</dbReference>
<dbReference type="GO" id="GO:0045893">
    <property type="term" value="P:positive regulation of DNA-templated transcription"/>
    <property type="evidence" value="ECO:0007669"/>
    <property type="project" value="UniProtKB-UniRule"/>
</dbReference>
<dbReference type="GO" id="GO:0019299">
    <property type="term" value="P:rhamnose metabolic process"/>
    <property type="evidence" value="ECO:0007669"/>
    <property type="project" value="UniProtKB-UniRule"/>
</dbReference>
<dbReference type="CDD" id="cd06977">
    <property type="entry name" value="cupin_RhaR_RhaS-like_N"/>
    <property type="match status" value="1"/>
</dbReference>
<dbReference type="Gene3D" id="1.10.10.60">
    <property type="entry name" value="Homeodomain-like"/>
    <property type="match status" value="1"/>
</dbReference>
<dbReference type="Gene3D" id="2.60.120.10">
    <property type="entry name" value="Jelly Rolls"/>
    <property type="match status" value="1"/>
</dbReference>
<dbReference type="HAMAP" id="MF_01533">
    <property type="entry name" value="HTH_type_RhaR"/>
    <property type="match status" value="1"/>
</dbReference>
<dbReference type="InterPro" id="IPR003313">
    <property type="entry name" value="AraC-bd"/>
</dbReference>
<dbReference type="InterPro" id="IPR009057">
    <property type="entry name" value="Homeodomain-like_sf"/>
</dbReference>
<dbReference type="InterPro" id="IPR018060">
    <property type="entry name" value="HTH_AraC"/>
</dbReference>
<dbReference type="InterPro" id="IPR018062">
    <property type="entry name" value="HTH_AraC-typ_CS"/>
</dbReference>
<dbReference type="InterPro" id="IPR047220">
    <property type="entry name" value="RhaR_RhaS-like_N"/>
</dbReference>
<dbReference type="InterPro" id="IPR014710">
    <property type="entry name" value="RmlC-like_jellyroll"/>
</dbReference>
<dbReference type="InterPro" id="IPR011051">
    <property type="entry name" value="RmlC_Cupin_sf"/>
</dbReference>
<dbReference type="InterPro" id="IPR023699">
    <property type="entry name" value="Tscrpt_act_RhaR"/>
</dbReference>
<dbReference type="InterPro" id="IPR020449">
    <property type="entry name" value="Tscrpt_reg_AraC-type_HTH"/>
</dbReference>
<dbReference type="NCBIfam" id="NF010026">
    <property type="entry name" value="PRK13501.1"/>
    <property type="match status" value="1"/>
</dbReference>
<dbReference type="PANTHER" id="PTHR43280">
    <property type="entry name" value="ARAC-FAMILY TRANSCRIPTIONAL REGULATOR"/>
    <property type="match status" value="1"/>
</dbReference>
<dbReference type="PANTHER" id="PTHR43280:SF13">
    <property type="entry name" value="HTH-TYPE TRANSCRIPTIONAL ACTIVATOR RHAR"/>
    <property type="match status" value="1"/>
</dbReference>
<dbReference type="Pfam" id="PF02311">
    <property type="entry name" value="AraC_binding"/>
    <property type="match status" value="1"/>
</dbReference>
<dbReference type="Pfam" id="PF12833">
    <property type="entry name" value="HTH_18"/>
    <property type="match status" value="1"/>
</dbReference>
<dbReference type="PRINTS" id="PR00032">
    <property type="entry name" value="HTHARAC"/>
</dbReference>
<dbReference type="SMART" id="SM00342">
    <property type="entry name" value="HTH_ARAC"/>
    <property type="match status" value="1"/>
</dbReference>
<dbReference type="SUPFAM" id="SSF46689">
    <property type="entry name" value="Homeodomain-like"/>
    <property type="match status" value="1"/>
</dbReference>
<dbReference type="SUPFAM" id="SSF51182">
    <property type="entry name" value="RmlC-like cupins"/>
    <property type="match status" value="1"/>
</dbReference>
<dbReference type="PROSITE" id="PS00041">
    <property type="entry name" value="HTH_ARAC_FAMILY_1"/>
    <property type="match status" value="1"/>
</dbReference>
<dbReference type="PROSITE" id="PS01124">
    <property type="entry name" value="HTH_ARAC_FAMILY_2"/>
    <property type="match status" value="1"/>
</dbReference>
<comment type="function">
    <text evidence="1">Activates expression of the rhaSR operon in response to L-rhamnose.</text>
</comment>
<comment type="subunit">
    <text evidence="1">Binds DNA as a dimer.</text>
</comment>
<comment type="subcellular location">
    <subcellularLocation>
        <location evidence="1">Cytoplasm</location>
    </subcellularLocation>
</comment>
<accession>Q1CEB6</accession>
<accession>C4GY54</accession>
<feature type="chain" id="PRO_0000292777" description="HTH-type transcriptional activator RhaR">
    <location>
        <begin position="1"/>
        <end position="290"/>
    </location>
</feature>
<feature type="domain" description="HTH araC/xylS-type" evidence="1">
    <location>
        <begin position="179"/>
        <end position="277"/>
    </location>
</feature>
<feature type="DNA-binding region" description="H-T-H motif" evidence="1">
    <location>
        <begin position="196"/>
        <end position="217"/>
    </location>
</feature>
<feature type="DNA-binding region" description="H-T-H motif" evidence="1">
    <location>
        <begin position="244"/>
        <end position="267"/>
    </location>
</feature>
<feature type="site" description="Interaction with sigma-70" evidence="1">
    <location>
        <position position="246"/>
    </location>
</feature>
<evidence type="ECO:0000255" key="1">
    <source>
        <dbReference type="HAMAP-Rule" id="MF_01533"/>
    </source>
</evidence>